<protein>
    <recommendedName>
        <fullName>Probable cation-transporting ATPase 13A5</fullName>
        <ecNumber>7.2.2.-</ecNumber>
    </recommendedName>
    <alternativeName>
        <fullName>P5-ATPase isoform 5</fullName>
    </alternativeName>
</protein>
<name>AT135_HUMAN</name>
<keyword id="KW-0067">ATP-binding</keyword>
<keyword id="KW-0325">Glycoprotein</keyword>
<keyword id="KW-0460">Magnesium</keyword>
<keyword id="KW-0472">Membrane</keyword>
<keyword id="KW-0479">Metal-binding</keyword>
<keyword id="KW-0547">Nucleotide-binding</keyword>
<keyword id="KW-1267">Proteomics identification</keyword>
<keyword id="KW-1185">Reference proteome</keyword>
<keyword id="KW-1278">Translocase</keyword>
<keyword id="KW-0812">Transmembrane</keyword>
<keyword id="KW-1133">Transmembrane helix</keyword>
<dbReference type="EC" id="7.2.2.-"/>
<dbReference type="EMBL" id="AY823163">
    <property type="protein sequence ID" value="AAX24103.1"/>
    <property type="molecule type" value="mRNA"/>
</dbReference>
<dbReference type="EMBL" id="AK122613">
    <property type="protein sequence ID" value="BAC85490.1"/>
    <property type="status" value="ALT_SEQ"/>
    <property type="molecule type" value="mRNA"/>
</dbReference>
<dbReference type="EMBL" id="AY358667">
    <property type="protein sequence ID" value="AAQ89030.1"/>
    <property type="status" value="ALT_SEQ"/>
    <property type="molecule type" value="mRNA"/>
</dbReference>
<dbReference type="CCDS" id="CCDS33914.1"/>
<dbReference type="RefSeq" id="NP_940907.2">
    <property type="nucleotide sequence ID" value="NM_198505.2"/>
</dbReference>
<dbReference type="SMR" id="Q4VNC0"/>
<dbReference type="BioGRID" id="131333">
    <property type="interactions" value="1"/>
</dbReference>
<dbReference type="FunCoup" id="Q4VNC0">
    <property type="interactions" value="5"/>
</dbReference>
<dbReference type="STRING" id="9606.ENSP00000341942"/>
<dbReference type="GlyCosmos" id="Q4VNC0">
    <property type="glycosylation" value="3 sites, No reported glycans"/>
</dbReference>
<dbReference type="GlyGen" id="Q4VNC0">
    <property type="glycosylation" value="3 sites"/>
</dbReference>
<dbReference type="iPTMnet" id="Q4VNC0"/>
<dbReference type="PhosphoSitePlus" id="Q4VNC0"/>
<dbReference type="BioMuta" id="ATP13A5"/>
<dbReference type="DMDM" id="74753861"/>
<dbReference type="jPOST" id="Q4VNC0"/>
<dbReference type="MassIVE" id="Q4VNC0"/>
<dbReference type="PaxDb" id="9606-ENSP00000341942"/>
<dbReference type="PeptideAtlas" id="Q4VNC0"/>
<dbReference type="ProteomicsDB" id="62310"/>
<dbReference type="Antibodypedia" id="65947">
    <property type="antibodies" value="13 antibodies from 7 providers"/>
</dbReference>
<dbReference type="DNASU" id="344905"/>
<dbReference type="Ensembl" id="ENST00000342358.9">
    <property type="protein sequence ID" value="ENSP00000341942.4"/>
    <property type="gene ID" value="ENSG00000187527.12"/>
</dbReference>
<dbReference type="GeneID" id="344905"/>
<dbReference type="KEGG" id="hsa:344905"/>
<dbReference type="MANE-Select" id="ENST00000342358.9">
    <property type="protein sequence ID" value="ENSP00000341942.4"/>
    <property type="RefSeq nucleotide sequence ID" value="NM_198505.4"/>
    <property type="RefSeq protein sequence ID" value="NP_940907.2"/>
</dbReference>
<dbReference type="UCSC" id="uc011bsq.3">
    <property type="organism name" value="human"/>
</dbReference>
<dbReference type="AGR" id="HGNC:31789"/>
<dbReference type="CTD" id="344905"/>
<dbReference type="DisGeNET" id="344905"/>
<dbReference type="GeneCards" id="ATP13A5"/>
<dbReference type="HGNC" id="HGNC:31789">
    <property type="gene designation" value="ATP13A5"/>
</dbReference>
<dbReference type="HPA" id="ENSG00000187527">
    <property type="expression patterns" value="Group enriched (breast, choroid plexus, salivary gland)"/>
</dbReference>
<dbReference type="MIM" id="619119">
    <property type="type" value="gene"/>
</dbReference>
<dbReference type="neXtProt" id="NX_Q4VNC0"/>
<dbReference type="OpenTargets" id="ENSG00000187527"/>
<dbReference type="PharmGKB" id="PA134952038"/>
<dbReference type="VEuPathDB" id="HostDB:ENSG00000187527"/>
<dbReference type="eggNOG" id="KOG0208">
    <property type="taxonomic scope" value="Eukaryota"/>
</dbReference>
<dbReference type="GeneTree" id="ENSGT00940000160327"/>
<dbReference type="HOGENOM" id="CLU_001828_0_0_1"/>
<dbReference type="InParanoid" id="Q4VNC0"/>
<dbReference type="OMA" id="KMEDCNV"/>
<dbReference type="OrthoDB" id="48943at2759"/>
<dbReference type="PAN-GO" id="Q4VNC0">
    <property type="GO annotations" value="4 GO annotations based on evolutionary models"/>
</dbReference>
<dbReference type="PhylomeDB" id="Q4VNC0"/>
<dbReference type="TreeFam" id="TF300331"/>
<dbReference type="PathwayCommons" id="Q4VNC0"/>
<dbReference type="Reactome" id="R-HSA-936837">
    <property type="pathway name" value="Ion transport by P-type ATPases"/>
</dbReference>
<dbReference type="BioGRID-ORCS" id="344905">
    <property type="hits" value="12 hits in 1141 CRISPR screens"/>
</dbReference>
<dbReference type="GenomeRNAi" id="344905"/>
<dbReference type="Pharos" id="Q4VNC0">
    <property type="development level" value="Tdark"/>
</dbReference>
<dbReference type="PRO" id="PR:Q4VNC0"/>
<dbReference type="Proteomes" id="UP000005640">
    <property type="component" value="Chromosome 3"/>
</dbReference>
<dbReference type="RNAct" id="Q4VNC0">
    <property type="molecule type" value="protein"/>
</dbReference>
<dbReference type="Bgee" id="ENSG00000187527">
    <property type="expression patterns" value="Expressed in nasal cavity epithelium and 89 other cell types or tissues"/>
</dbReference>
<dbReference type="ExpressionAtlas" id="Q4VNC0">
    <property type="expression patterns" value="baseline and differential"/>
</dbReference>
<dbReference type="GO" id="GO:0031902">
    <property type="term" value="C:late endosome membrane"/>
    <property type="evidence" value="ECO:0000318"/>
    <property type="project" value="GO_Central"/>
</dbReference>
<dbReference type="GO" id="GO:0005886">
    <property type="term" value="C:plasma membrane"/>
    <property type="evidence" value="ECO:0000304"/>
    <property type="project" value="Reactome"/>
</dbReference>
<dbReference type="GO" id="GO:0005524">
    <property type="term" value="F:ATP binding"/>
    <property type="evidence" value="ECO:0007669"/>
    <property type="project" value="UniProtKB-KW"/>
</dbReference>
<dbReference type="GO" id="GO:0016887">
    <property type="term" value="F:ATP hydrolysis activity"/>
    <property type="evidence" value="ECO:0007669"/>
    <property type="project" value="InterPro"/>
</dbReference>
<dbReference type="GO" id="GO:0019829">
    <property type="term" value="F:ATPase-coupled monoatomic cation transmembrane transporter activity"/>
    <property type="evidence" value="ECO:0000318"/>
    <property type="project" value="GO_Central"/>
</dbReference>
<dbReference type="GO" id="GO:0046872">
    <property type="term" value="F:metal ion binding"/>
    <property type="evidence" value="ECO:0007669"/>
    <property type="project" value="UniProtKB-KW"/>
</dbReference>
<dbReference type="GO" id="GO:0015662">
    <property type="term" value="F:P-type ion transporter activity"/>
    <property type="evidence" value="ECO:0007669"/>
    <property type="project" value="InterPro"/>
</dbReference>
<dbReference type="GO" id="GO:0015203">
    <property type="term" value="F:polyamine transmembrane transporter activity"/>
    <property type="evidence" value="ECO:0000318"/>
    <property type="project" value="GO_Central"/>
</dbReference>
<dbReference type="GO" id="GO:0006874">
    <property type="term" value="P:intracellular calcium ion homeostasis"/>
    <property type="evidence" value="ECO:0000318"/>
    <property type="project" value="GO_Central"/>
</dbReference>
<dbReference type="GO" id="GO:0034220">
    <property type="term" value="P:monoatomic ion transmembrane transport"/>
    <property type="evidence" value="ECO:0000304"/>
    <property type="project" value="Reactome"/>
</dbReference>
<dbReference type="GO" id="GO:1902047">
    <property type="term" value="P:polyamine transmembrane transport"/>
    <property type="evidence" value="ECO:0000318"/>
    <property type="project" value="GO_Central"/>
</dbReference>
<dbReference type="CDD" id="cd07542">
    <property type="entry name" value="P-type_ATPase_cation"/>
    <property type="match status" value="1"/>
</dbReference>
<dbReference type="FunFam" id="1.20.1110.10:FF:000023">
    <property type="entry name" value="Cation-transporting ATPase"/>
    <property type="match status" value="1"/>
</dbReference>
<dbReference type="FunFam" id="2.70.150.10:FF:000035">
    <property type="entry name" value="Cation-transporting ATPase"/>
    <property type="match status" value="1"/>
</dbReference>
<dbReference type="FunFam" id="3.40.1110.10:FF:000028">
    <property type="entry name" value="Cation-transporting ATPase"/>
    <property type="match status" value="1"/>
</dbReference>
<dbReference type="FunFam" id="3.40.50.1000:FF:000075">
    <property type="entry name" value="Cation-transporting ATPase"/>
    <property type="match status" value="1"/>
</dbReference>
<dbReference type="Gene3D" id="3.40.1110.10">
    <property type="entry name" value="Calcium-transporting ATPase, cytoplasmic domain N"/>
    <property type="match status" value="1"/>
</dbReference>
<dbReference type="Gene3D" id="2.70.150.10">
    <property type="entry name" value="Calcium-transporting ATPase, cytoplasmic transduction domain A"/>
    <property type="match status" value="1"/>
</dbReference>
<dbReference type="Gene3D" id="1.20.1110.10">
    <property type="entry name" value="Calcium-transporting ATPase, transmembrane domain"/>
    <property type="match status" value="1"/>
</dbReference>
<dbReference type="Gene3D" id="3.40.50.1000">
    <property type="entry name" value="HAD superfamily/HAD-like"/>
    <property type="match status" value="1"/>
</dbReference>
<dbReference type="InterPro" id="IPR004014">
    <property type="entry name" value="ATPase_P-typ_cation-transptr_N"/>
</dbReference>
<dbReference type="InterPro" id="IPR023299">
    <property type="entry name" value="ATPase_P-typ_cyto_dom_N"/>
</dbReference>
<dbReference type="InterPro" id="IPR018303">
    <property type="entry name" value="ATPase_P-typ_P_site"/>
</dbReference>
<dbReference type="InterPro" id="IPR023298">
    <property type="entry name" value="ATPase_P-typ_TM_dom_sf"/>
</dbReference>
<dbReference type="InterPro" id="IPR008250">
    <property type="entry name" value="ATPase_P-typ_transduc_dom_A_sf"/>
</dbReference>
<dbReference type="InterPro" id="IPR036412">
    <property type="entry name" value="HAD-like_sf"/>
</dbReference>
<dbReference type="InterPro" id="IPR023214">
    <property type="entry name" value="HAD_sf"/>
</dbReference>
<dbReference type="InterPro" id="IPR006544">
    <property type="entry name" value="P-type_TPase_V"/>
</dbReference>
<dbReference type="InterPro" id="IPR047819">
    <property type="entry name" value="P5A-ATPase_N"/>
</dbReference>
<dbReference type="InterPro" id="IPR047821">
    <property type="entry name" value="P5B-type_ATPase"/>
</dbReference>
<dbReference type="InterPro" id="IPR001757">
    <property type="entry name" value="P_typ_ATPase"/>
</dbReference>
<dbReference type="InterPro" id="IPR044492">
    <property type="entry name" value="P_typ_ATPase_HD_dom"/>
</dbReference>
<dbReference type="NCBIfam" id="TIGR01494">
    <property type="entry name" value="ATPase_P-type"/>
    <property type="match status" value="1"/>
</dbReference>
<dbReference type="NCBIfam" id="TIGR01657">
    <property type="entry name" value="P-ATPase-V"/>
    <property type="match status" value="1"/>
</dbReference>
<dbReference type="PANTHER" id="PTHR45630:SF4">
    <property type="entry name" value="CATION-TRANSPORTING ATPASE 13A5-RELATED"/>
    <property type="match status" value="1"/>
</dbReference>
<dbReference type="PANTHER" id="PTHR45630">
    <property type="entry name" value="CATION-TRANSPORTING ATPASE-RELATED"/>
    <property type="match status" value="1"/>
</dbReference>
<dbReference type="Pfam" id="PF13246">
    <property type="entry name" value="Cation_ATPase"/>
    <property type="match status" value="1"/>
</dbReference>
<dbReference type="Pfam" id="PF00690">
    <property type="entry name" value="Cation_ATPase_N"/>
    <property type="match status" value="1"/>
</dbReference>
<dbReference type="Pfam" id="PF00122">
    <property type="entry name" value="E1-E2_ATPase"/>
    <property type="match status" value="1"/>
</dbReference>
<dbReference type="Pfam" id="PF12409">
    <property type="entry name" value="P5-ATPase"/>
    <property type="match status" value="1"/>
</dbReference>
<dbReference type="PRINTS" id="PR00119">
    <property type="entry name" value="CATATPASE"/>
</dbReference>
<dbReference type="PRINTS" id="PR00121">
    <property type="entry name" value="NAKATPASE"/>
</dbReference>
<dbReference type="SFLD" id="SFLDG00002">
    <property type="entry name" value="C1.7:_P-type_atpase_like"/>
    <property type="match status" value="1"/>
</dbReference>
<dbReference type="SFLD" id="SFLDF00027">
    <property type="entry name" value="p-type_atpase"/>
    <property type="match status" value="1"/>
</dbReference>
<dbReference type="SUPFAM" id="SSF81653">
    <property type="entry name" value="Calcium ATPase, transduction domain A"/>
    <property type="match status" value="1"/>
</dbReference>
<dbReference type="SUPFAM" id="SSF81665">
    <property type="entry name" value="Calcium ATPase, transmembrane domain M"/>
    <property type="match status" value="1"/>
</dbReference>
<dbReference type="SUPFAM" id="SSF56784">
    <property type="entry name" value="HAD-like"/>
    <property type="match status" value="1"/>
</dbReference>
<dbReference type="SUPFAM" id="SSF81660">
    <property type="entry name" value="Metal cation-transporting ATPase, ATP-binding domain N"/>
    <property type="match status" value="1"/>
</dbReference>
<dbReference type="PROSITE" id="PS00154">
    <property type="entry name" value="ATPASE_E1_E2"/>
    <property type="match status" value="1"/>
</dbReference>
<reference key="1">
    <citation type="journal article" date="2005" name="Genomics">
        <title>Characterization of a novel cation transporter ATPase gene (ATP13A4) interrupted by 3q25-q29 inversion in an individual with language delay.</title>
        <authorList>
            <person name="Kwasnicka-Crawford D.A."/>
            <person name="Carson A.R."/>
            <person name="Roberts W."/>
            <person name="Summers A.M."/>
            <person name="Rehnstrom K."/>
            <person name="Jarvela I."/>
            <person name="Scherer S.W."/>
        </authorList>
    </citation>
    <scope>NUCLEOTIDE SEQUENCE [MRNA]</scope>
</reference>
<reference key="2">
    <citation type="journal article" date="2004" name="Nat. Genet.">
        <title>Complete sequencing and characterization of 21,243 full-length human cDNAs.</title>
        <authorList>
            <person name="Ota T."/>
            <person name="Suzuki Y."/>
            <person name="Nishikawa T."/>
            <person name="Otsuki T."/>
            <person name="Sugiyama T."/>
            <person name="Irie R."/>
            <person name="Wakamatsu A."/>
            <person name="Hayashi K."/>
            <person name="Sato H."/>
            <person name="Nagai K."/>
            <person name="Kimura K."/>
            <person name="Makita H."/>
            <person name="Sekine M."/>
            <person name="Obayashi M."/>
            <person name="Nishi T."/>
            <person name="Shibahara T."/>
            <person name="Tanaka T."/>
            <person name="Ishii S."/>
            <person name="Yamamoto J."/>
            <person name="Saito K."/>
            <person name="Kawai Y."/>
            <person name="Isono Y."/>
            <person name="Nakamura Y."/>
            <person name="Nagahari K."/>
            <person name="Murakami K."/>
            <person name="Yasuda T."/>
            <person name="Iwayanagi T."/>
            <person name="Wagatsuma M."/>
            <person name="Shiratori A."/>
            <person name="Sudo H."/>
            <person name="Hosoiri T."/>
            <person name="Kaku Y."/>
            <person name="Kodaira H."/>
            <person name="Kondo H."/>
            <person name="Sugawara M."/>
            <person name="Takahashi M."/>
            <person name="Kanda K."/>
            <person name="Yokoi T."/>
            <person name="Furuya T."/>
            <person name="Kikkawa E."/>
            <person name="Omura Y."/>
            <person name="Abe K."/>
            <person name="Kamihara K."/>
            <person name="Katsuta N."/>
            <person name="Sato K."/>
            <person name="Tanikawa M."/>
            <person name="Yamazaki M."/>
            <person name="Ninomiya K."/>
            <person name="Ishibashi T."/>
            <person name="Yamashita H."/>
            <person name="Murakawa K."/>
            <person name="Fujimori K."/>
            <person name="Tanai H."/>
            <person name="Kimata M."/>
            <person name="Watanabe M."/>
            <person name="Hiraoka S."/>
            <person name="Chiba Y."/>
            <person name="Ishida S."/>
            <person name="Ono Y."/>
            <person name="Takiguchi S."/>
            <person name="Watanabe S."/>
            <person name="Yosida M."/>
            <person name="Hotuta T."/>
            <person name="Kusano J."/>
            <person name="Kanehori K."/>
            <person name="Takahashi-Fujii A."/>
            <person name="Hara H."/>
            <person name="Tanase T.-O."/>
            <person name="Nomura Y."/>
            <person name="Togiya S."/>
            <person name="Komai F."/>
            <person name="Hara R."/>
            <person name="Takeuchi K."/>
            <person name="Arita M."/>
            <person name="Imose N."/>
            <person name="Musashino K."/>
            <person name="Yuuki H."/>
            <person name="Oshima A."/>
            <person name="Sasaki N."/>
            <person name="Aotsuka S."/>
            <person name="Yoshikawa Y."/>
            <person name="Matsunawa H."/>
            <person name="Ichihara T."/>
            <person name="Shiohata N."/>
            <person name="Sano S."/>
            <person name="Moriya S."/>
            <person name="Momiyama H."/>
            <person name="Satoh N."/>
            <person name="Takami S."/>
            <person name="Terashima Y."/>
            <person name="Suzuki O."/>
            <person name="Nakagawa S."/>
            <person name="Senoh A."/>
            <person name="Mizoguchi H."/>
            <person name="Goto Y."/>
            <person name="Shimizu F."/>
            <person name="Wakebe H."/>
            <person name="Hishigaki H."/>
            <person name="Watanabe T."/>
            <person name="Sugiyama A."/>
            <person name="Takemoto M."/>
            <person name="Kawakami B."/>
            <person name="Yamazaki M."/>
            <person name="Watanabe K."/>
            <person name="Kumagai A."/>
            <person name="Itakura S."/>
            <person name="Fukuzumi Y."/>
            <person name="Fujimori Y."/>
            <person name="Komiyama M."/>
            <person name="Tashiro H."/>
            <person name="Tanigami A."/>
            <person name="Fujiwara T."/>
            <person name="Ono T."/>
            <person name="Yamada K."/>
            <person name="Fujii Y."/>
            <person name="Ozaki K."/>
            <person name="Hirao M."/>
            <person name="Ohmori Y."/>
            <person name="Kawabata A."/>
            <person name="Hikiji T."/>
            <person name="Kobatake N."/>
            <person name="Inagaki H."/>
            <person name="Ikema Y."/>
            <person name="Okamoto S."/>
            <person name="Okitani R."/>
            <person name="Kawakami T."/>
            <person name="Noguchi S."/>
            <person name="Itoh T."/>
            <person name="Shigeta K."/>
            <person name="Senba T."/>
            <person name="Matsumura K."/>
            <person name="Nakajima Y."/>
            <person name="Mizuno T."/>
            <person name="Morinaga M."/>
            <person name="Sasaki M."/>
            <person name="Togashi T."/>
            <person name="Oyama M."/>
            <person name="Hata H."/>
            <person name="Watanabe M."/>
            <person name="Komatsu T."/>
            <person name="Mizushima-Sugano J."/>
            <person name="Satoh T."/>
            <person name="Shirai Y."/>
            <person name="Takahashi Y."/>
            <person name="Nakagawa K."/>
            <person name="Okumura K."/>
            <person name="Nagase T."/>
            <person name="Nomura N."/>
            <person name="Kikuchi H."/>
            <person name="Masuho Y."/>
            <person name="Yamashita R."/>
            <person name="Nakai K."/>
            <person name="Yada T."/>
            <person name="Nakamura Y."/>
            <person name="Ohara O."/>
            <person name="Isogai T."/>
            <person name="Sugano S."/>
        </authorList>
    </citation>
    <scope>NUCLEOTIDE SEQUENCE [LARGE SCALE MRNA] OF 1-1016</scope>
    <scope>VARIANT TYR-96</scope>
    <source>
        <tissue>Tongue</tissue>
    </source>
</reference>
<reference key="3">
    <citation type="journal article" date="2003" name="Genome Res.">
        <title>The secreted protein discovery initiative (SPDI), a large-scale effort to identify novel human secreted and transmembrane proteins: a bioinformatics assessment.</title>
        <authorList>
            <person name="Clark H.F."/>
            <person name="Gurney A.L."/>
            <person name="Abaya E."/>
            <person name="Baker K."/>
            <person name="Baldwin D.T."/>
            <person name="Brush J."/>
            <person name="Chen J."/>
            <person name="Chow B."/>
            <person name="Chui C."/>
            <person name="Crowley C."/>
            <person name="Currell B."/>
            <person name="Deuel B."/>
            <person name="Dowd P."/>
            <person name="Eaton D."/>
            <person name="Foster J.S."/>
            <person name="Grimaldi C."/>
            <person name="Gu Q."/>
            <person name="Hass P.E."/>
            <person name="Heldens S."/>
            <person name="Huang A."/>
            <person name="Kim H.S."/>
            <person name="Klimowski L."/>
            <person name="Jin Y."/>
            <person name="Johnson S."/>
            <person name="Lee J."/>
            <person name="Lewis L."/>
            <person name="Liao D."/>
            <person name="Mark M.R."/>
            <person name="Robbie E."/>
            <person name="Sanchez C."/>
            <person name="Schoenfeld J."/>
            <person name="Seshagiri S."/>
            <person name="Simmons L."/>
            <person name="Singh J."/>
            <person name="Smith V."/>
            <person name="Stinson J."/>
            <person name="Vagts A."/>
            <person name="Vandlen R.L."/>
            <person name="Watanabe C."/>
            <person name="Wieand D."/>
            <person name="Woods K."/>
            <person name="Xie M.-H."/>
            <person name="Yansura D.G."/>
            <person name="Yi S."/>
            <person name="Yu G."/>
            <person name="Yuan J."/>
            <person name="Zhang M."/>
            <person name="Zhang Z."/>
            <person name="Goddard A.D."/>
            <person name="Wood W.I."/>
            <person name="Godowski P.J."/>
            <person name="Gray A.M."/>
        </authorList>
    </citation>
    <scope>NUCLEOTIDE SEQUENCE [LARGE SCALE MRNA] OF 1065-1218</scope>
    <scope>VARIANT ALA-1131</scope>
</reference>
<sequence>MEENSKKDHRALLNQGEEDELEVFGYRDHNVRKAFCLVASVLTCGGLLLVFYWRPQWRVWANCIPCPLQEADTVLLRTTDEFQRYMRKKVFCLYLSTLKFPVSKKWEESLVADRHSVINQALIKPELKLRCMEVQKIRYVWNDLEKRFQKVGLLEDSNSCSDIHQTFGLGLTSEEQEVRRLVCGPNAIEVEIQPIWKLLVKQVLNPFYVFQAFTLTLWLSQGYIEYSVAIIILTVISIVLSVYDLRQQSVKLHNLVEDHNKVQVTIIVKDKGLEELESRLLVPGDILILPGKFSLPCDAVLIDGSCVVNEGMLTGESIPVTKTPLPQMENTMPWKCHSLEDYRKHVLFCGTEVIQVKPSGQGPVRAVVLQTGYNTAKGDLVRSILYPRPLNFKLYSDAFKFIVFLACLGVMGFFYALGVYMYHGVPPKDTVTMALILLTVTVPPVLPAALTIGNVYAQKRLKKKKIFCISPQRINMCGQINLVCFDKTGTLTEDGLDLWGTVPTADNCFQEAHSFASGQAVPWSPLCAAMASCHSLILLNGTIQGDPLDLKMFEGTAWKMEDCIVDSCKFGTSVSNIIKPGPKASKSPVEAIITLCQFPFSSSLQRMSVIAQLAGENHFHVYMKGAPEMVARFCRSETVPKNFPQELRSYTVQGFRVIALAHKTLKMGNLSEVEHLAREKVESELTFLGLLIMENRLKKETKLVLKELSEARIRTVMITGDNLQTAITVAKNSEMIPPGSQVIIVEADEPEEFVPASVTWQLVENQETGPGKKEIYMHTGNSSTPRGEGGSCYHFAMSGKSYQVIFQHFNSLLPKILVNGTVFARMSPGQKSSLIEEFQKLNYYVGMCGDGANDCGALKAAHAGISLSEQEASVASPFTSKTTNIQCVPHLIREGRAALVSSFGVFKYLTMYGIIQFISALLLYWQLQLFGNYQYLMQDVAITLMVCLTMSSTHAYPKLAPYRPAGQLLSPPLLLSIFLNSCFSCIVQISAFLYVKQQPWYCEVYQYSECFLANQSNFSTNVSLERNWTGNATLIPGSILSFETTTLWPITTINYITVAFIFSKGKPFRKPIYTNYIFSFLLLAALGLTIFILFSDFQVIYRGMELIPTITSWRVLILVVALTQFCVAFFVEDSILQNHELWLLIKREFGFYSKSQYRTWQKKLAEDSTWPPINRTDYSGDGKNGFYINGGYESHEQIPKRKLKLGGQPTEQHFWARL</sequence>
<evidence type="ECO:0000250" key="1"/>
<evidence type="ECO:0000255" key="2"/>
<evidence type="ECO:0000269" key="3">
    <source>
    </source>
</evidence>
<evidence type="ECO:0000269" key="4">
    <source>
    </source>
</evidence>
<evidence type="ECO:0000305" key="5"/>
<gene>
    <name type="primary">ATP13A5</name>
    <name type="ORF">UNQ488/PRO1004</name>
</gene>
<organism>
    <name type="scientific">Homo sapiens</name>
    <name type="common">Human</name>
    <dbReference type="NCBI Taxonomy" id="9606"/>
    <lineage>
        <taxon>Eukaryota</taxon>
        <taxon>Metazoa</taxon>
        <taxon>Chordata</taxon>
        <taxon>Craniata</taxon>
        <taxon>Vertebrata</taxon>
        <taxon>Euteleostomi</taxon>
        <taxon>Mammalia</taxon>
        <taxon>Eutheria</taxon>
        <taxon>Euarchontoglires</taxon>
        <taxon>Primates</taxon>
        <taxon>Haplorrhini</taxon>
        <taxon>Catarrhini</taxon>
        <taxon>Hominidae</taxon>
        <taxon>Homo</taxon>
    </lineage>
</organism>
<comment type="catalytic activity">
    <reaction>
        <text>ATP + H2O = ADP + phosphate + H(+)</text>
        <dbReference type="Rhea" id="RHEA:13065"/>
        <dbReference type="ChEBI" id="CHEBI:15377"/>
        <dbReference type="ChEBI" id="CHEBI:15378"/>
        <dbReference type="ChEBI" id="CHEBI:30616"/>
        <dbReference type="ChEBI" id="CHEBI:43474"/>
        <dbReference type="ChEBI" id="CHEBI:456216"/>
    </reaction>
</comment>
<comment type="subcellular location">
    <subcellularLocation>
        <location evidence="5">Membrane</location>
        <topology evidence="5">Multi-pass membrane protein</topology>
    </subcellularLocation>
</comment>
<comment type="similarity">
    <text evidence="5">Belongs to the cation transport ATPase (P-type) (TC 3.A.3) family. Type V subfamily.</text>
</comment>
<comment type="sequence caution" evidence="5">
    <conflict type="erroneous initiation">
        <sequence resource="EMBL-CDS" id="AAQ89030"/>
    </conflict>
    <text>Truncated N-terminus.</text>
</comment>
<comment type="sequence caution" evidence="5">
    <conflict type="frameshift">
        <sequence resource="EMBL-CDS" id="AAQ89030"/>
    </conflict>
</comment>
<comment type="sequence caution" evidence="5">
    <conflict type="miscellaneous discrepancy">
        <sequence resource="EMBL-CDS" id="BAC85490"/>
    </conflict>
    <text>Unlikely isoform. Cloning artifact.</text>
</comment>
<feature type="chain" id="PRO_0000337122" description="Probable cation-transporting ATPase 13A5">
    <location>
        <begin position="1"/>
        <end position="1218"/>
    </location>
</feature>
<feature type="transmembrane region" description="Helical" evidence="2">
    <location>
        <begin position="33"/>
        <end position="53"/>
    </location>
</feature>
<feature type="transmembrane region" description="Helical" evidence="2">
    <location>
        <begin position="222"/>
        <end position="242"/>
    </location>
</feature>
<feature type="transmembrane region" description="Helical" evidence="2">
    <location>
        <begin position="401"/>
        <end position="421"/>
    </location>
</feature>
<feature type="transmembrane region" description="Helical" evidence="2">
    <location>
        <begin position="433"/>
        <end position="453"/>
    </location>
</feature>
<feature type="transmembrane region" description="Helical" evidence="2">
    <location>
        <begin position="903"/>
        <end position="923"/>
    </location>
</feature>
<feature type="transmembrane region" description="Helical" evidence="2">
    <location>
        <begin position="940"/>
        <end position="956"/>
    </location>
</feature>
<feature type="transmembrane region" description="Helical" evidence="2">
    <location>
        <begin position="973"/>
        <end position="993"/>
    </location>
</feature>
<feature type="transmembrane region" description="Helical" evidence="2">
    <location>
        <begin position="1042"/>
        <end position="1062"/>
    </location>
</feature>
<feature type="transmembrane region" description="Helical" evidence="2">
    <location>
        <begin position="1077"/>
        <end position="1097"/>
    </location>
</feature>
<feature type="transmembrane region" description="Helical" evidence="2">
    <location>
        <begin position="1115"/>
        <end position="1135"/>
    </location>
</feature>
<feature type="active site" description="4-aspartylphosphate intermediate" evidence="1">
    <location>
        <position position="486"/>
    </location>
</feature>
<feature type="binding site" evidence="1">
    <location>
        <position position="850"/>
    </location>
    <ligand>
        <name>Mg(2+)</name>
        <dbReference type="ChEBI" id="CHEBI:18420"/>
    </ligand>
</feature>
<feature type="binding site" evidence="1">
    <location>
        <position position="854"/>
    </location>
    <ligand>
        <name>Mg(2+)</name>
        <dbReference type="ChEBI" id="CHEBI:18420"/>
    </ligand>
</feature>
<feature type="glycosylation site" description="N-linked (GlcNAc...) asparagine" evidence="2">
    <location>
        <position position="540"/>
    </location>
</feature>
<feature type="glycosylation site" description="N-linked (GlcNAc...) asparagine" evidence="2">
    <location>
        <position position="669"/>
    </location>
</feature>
<feature type="glycosylation site" description="N-linked (GlcNAc...) asparagine" evidence="2">
    <location>
        <position position="819"/>
    </location>
</feature>
<feature type="sequence variant" id="VAR_061039" description="In dbSNP:rs12637558." evidence="4">
    <original>S</original>
    <variation>Y</variation>
    <location>
        <position position="96"/>
    </location>
</feature>
<feature type="sequence variant" id="VAR_043614" description="In dbSNP:rs6797429.">
    <original>E</original>
    <variation>Q</variation>
    <location>
        <position position="133"/>
    </location>
</feature>
<feature type="sequence variant" id="VAR_043615" description="In dbSNP:rs2280268.">
    <original>G</original>
    <variation>S</variation>
    <location>
        <position position="739"/>
    </location>
</feature>
<feature type="sequence variant" id="VAR_043616" description="In dbSNP:rs6787746.">
    <original>I</original>
    <variation>V</variation>
    <location>
        <position position="1053"/>
    </location>
</feature>
<feature type="sequence variant" id="VAR_043617" description="In dbSNP:rs2271791." evidence="3">
    <original>V</original>
    <variation>A</variation>
    <location>
        <position position="1131"/>
    </location>
</feature>
<feature type="sequence variant" id="VAR_043618" description="In dbSNP:rs7428010.">
    <original>K</original>
    <variation>Q</variation>
    <location>
        <position position="1204"/>
    </location>
</feature>
<feature type="sequence conflict" description="In Ref. 2; BAC85490." evidence="5" ref="2">
    <original>K</original>
    <variation>E</variation>
    <location>
        <position position="357"/>
    </location>
</feature>
<accession>Q4VNC0</accession>
<accession>Q6UWS4</accession>
<accession>Q6ZWL0</accession>
<proteinExistence type="evidence at protein level"/>